<protein>
    <recommendedName>
        <fullName evidence="1">Hydroxyacylglutathione hydrolase</fullName>
        <ecNumber evidence="1">3.1.2.6</ecNumber>
    </recommendedName>
    <alternativeName>
        <fullName evidence="1">Glyoxalase II</fullName>
        <shortName evidence="1">Glx II</shortName>
    </alternativeName>
</protein>
<dbReference type="EC" id="3.1.2.6" evidence="1"/>
<dbReference type="EMBL" id="CP000450">
    <property type="protein sequence ID" value="ABI60400.1"/>
    <property type="molecule type" value="Genomic_DNA"/>
</dbReference>
<dbReference type="RefSeq" id="WP_011635197.1">
    <property type="nucleotide sequence ID" value="NC_008344.1"/>
</dbReference>
<dbReference type="SMR" id="Q0AE32"/>
<dbReference type="STRING" id="335283.Neut_2178"/>
<dbReference type="KEGG" id="net:Neut_2178"/>
<dbReference type="eggNOG" id="COG0491">
    <property type="taxonomic scope" value="Bacteria"/>
</dbReference>
<dbReference type="HOGENOM" id="CLU_030571_4_1_4"/>
<dbReference type="OrthoDB" id="9802248at2"/>
<dbReference type="UniPathway" id="UPA00619">
    <property type="reaction ID" value="UER00676"/>
</dbReference>
<dbReference type="Proteomes" id="UP000001966">
    <property type="component" value="Chromosome"/>
</dbReference>
<dbReference type="GO" id="GO:0004416">
    <property type="term" value="F:hydroxyacylglutathione hydrolase activity"/>
    <property type="evidence" value="ECO:0007669"/>
    <property type="project" value="UniProtKB-UniRule"/>
</dbReference>
<dbReference type="GO" id="GO:0046872">
    <property type="term" value="F:metal ion binding"/>
    <property type="evidence" value="ECO:0007669"/>
    <property type="project" value="UniProtKB-KW"/>
</dbReference>
<dbReference type="GO" id="GO:0019243">
    <property type="term" value="P:methylglyoxal catabolic process to D-lactate via S-lactoyl-glutathione"/>
    <property type="evidence" value="ECO:0007669"/>
    <property type="project" value="InterPro"/>
</dbReference>
<dbReference type="CDD" id="cd07723">
    <property type="entry name" value="hydroxyacylglutathione_hydrolase_MBL-fold"/>
    <property type="match status" value="1"/>
</dbReference>
<dbReference type="Gene3D" id="3.60.15.10">
    <property type="entry name" value="Ribonuclease Z/Hydroxyacylglutathione hydrolase-like"/>
    <property type="match status" value="1"/>
</dbReference>
<dbReference type="HAMAP" id="MF_01374">
    <property type="entry name" value="Glyoxalase_2"/>
    <property type="match status" value="1"/>
</dbReference>
<dbReference type="InterPro" id="IPR035680">
    <property type="entry name" value="Clx_II_MBL"/>
</dbReference>
<dbReference type="InterPro" id="IPR050110">
    <property type="entry name" value="Glyoxalase_II_hydrolase"/>
</dbReference>
<dbReference type="InterPro" id="IPR032282">
    <property type="entry name" value="HAGH_C"/>
</dbReference>
<dbReference type="InterPro" id="IPR017782">
    <property type="entry name" value="Hydroxyacylglutathione_Hdrlase"/>
</dbReference>
<dbReference type="InterPro" id="IPR001279">
    <property type="entry name" value="Metallo-B-lactamas"/>
</dbReference>
<dbReference type="InterPro" id="IPR036866">
    <property type="entry name" value="RibonucZ/Hydroxyglut_hydro"/>
</dbReference>
<dbReference type="NCBIfam" id="TIGR03413">
    <property type="entry name" value="GSH_gloB"/>
    <property type="match status" value="1"/>
</dbReference>
<dbReference type="PANTHER" id="PTHR43705">
    <property type="entry name" value="HYDROXYACYLGLUTATHIONE HYDROLASE"/>
    <property type="match status" value="1"/>
</dbReference>
<dbReference type="PANTHER" id="PTHR43705:SF1">
    <property type="entry name" value="HYDROXYACYLGLUTATHIONE HYDROLASE GLOB"/>
    <property type="match status" value="1"/>
</dbReference>
<dbReference type="Pfam" id="PF16123">
    <property type="entry name" value="HAGH_C"/>
    <property type="match status" value="1"/>
</dbReference>
<dbReference type="Pfam" id="PF00753">
    <property type="entry name" value="Lactamase_B"/>
    <property type="match status" value="1"/>
</dbReference>
<dbReference type="PIRSF" id="PIRSF005457">
    <property type="entry name" value="Glx"/>
    <property type="match status" value="1"/>
</dbReference>
<dbReference type="SMART" id="SM00849">
    <property type="entry name" value="Lactamase_B"/>
    <property type="match status" value="1"/>
</dbReference>
<dbReference type="SUPFAM" id="SSF56281">
    <property type="entry name" value="Metallo-hydrolase/oxidoreductase"/>
    <property type="match status" value="1"/>
</dbReference>
<feature type="chain" id="PRO_1000144774" description="Hydroxyacylglutathione hydrolase">
    <location>
        <begin position="1"/>
        <end position="255"/>
    </location>
</feature>
<feature type="binding site" evidence="1">
    <location>
        <position position="53"/>
    </location>
    <ligand>
        <name>Zn(2+)</name>
        <dbReference type="ChEBI" id="CHEBI:29105"/>
        <label>1</label>
    </ligand>
</feature>
<feature type="binding site" evidence="1">
    <location>
        <position position="55"/>
    </location>
    <ligand>
        <name>Zn(2+)</name>
        <dbReference type="ChEBI" id="CHEBI:29105"/>
        <label>1</label>
    </ligand>
</feature>
<feature type="binding site" evidence="1">
    <location>
        <position position="57"/>
    </location>
    <ligand>
        <name>Zn(2+)</name>
        <dbReference type="ChEBI" id="CHEBI:29105"/>
        <label>2</label>
    </ligand>
</feature>
<feature type="binding site" evidence="1">
    <location>
        <position position="58"/>
    </location>
    <ligand>
        <name>Zn(2+)</name>
        <dbReference type="ChEBI" id="CHEBI:29105"/>
        <label>2</label>
    </ligand>
</feature>
<feature type="binding site" evidence="1">
    <location>
        <position position="111"/>
    </location>
    <ligand>
        <name>Zn(2+)</name>
        <dbReference type="ChEBI" id="CHEBI:29105"/>
        <label>1</label>
    </ligand>
</feature>
<feature type="binding site" evidence="1">
    <location>
        <position position="128"/>
    </location>
    <ligand>
        <name>Zn(2+)</name>
        <dbReference type="ChEBI" id="CHEBI:29105"/>
        <label>1</label>
    </ligand>
</feature>
<feature type="binding site" evidence="1">
    <location>
        <position position="128"/>
    </location>
    <ligand>
        <name>Zn(2+)</name>
        <dbReference type="ChEBI" id="CHEBI:29105"/>
        <label>2</label>
    </ligand>
</feature>
<feature type="binding site" evidence="1">
    <location>
        <position position="166"/>
    </location>
    <ligand>
        <name>Zn(2+)</name>
        <dbReference type="ChEBI" id="CHEBI:29105"/>
        <label>2</label>
    </ligand>
</feature>
<proteinExistence type="inferred from homology"/>
<evidence type="ECO:0000255" key="1">
    <source>
        <dbReference type="HAMAP-Rule" id="MF_01374"/>
    </source>
</evidence>
<sequence>MIDVFPVRAFKDNYIWIVHNQQFALIIDPGDATPVLAWISQQNLQPIAILCTHHHHDHTGGIPSLVQEFAIPVYGPANEKIPGMTHPLTGGDTLSFPELSLEFSVLDIPGHTAGHIAYYGQNYLFCGDTLFACGCGRIFEGSAQQMLASLQKLASLPDETLVYCAHEYTLANVRFARVLDPDNPDLIKLESTVEEKLKQNIPTLPSSLAVEKATNPFLRCDQPAIIHSASQHVGRHLNDPVSVFAAIRDWKNNFQ</sequence>
<organism>
    <name type="scientific">Nitrosomonas eutropha (strain DSM 101675 / C91 / Nm57)</name>
    <dbReference type="NCBI Taxonomy" id="335283"/>
    <lineage>
        <taxon>Bacteria</taxon>
        <taxon>Pseudomonadati</taxon>
        <taxon>Pseudomonadota</taxon>
        <taxon>Betaproteobacteria</taxon>
        <taxon>Nitrosomonadales</taxon>
        <taxon>Nitrosomonadaceae</taxon>
        <taxon>Nitrosomonas</taxon>
    </lineage>
</organism>
<gene>
    <name evidence="1" type="primary">gloB</name>
    <name type="ordered locus">Neut_2178</name>
</gene>
<reference key="1">
    <citation type="journal article" date="2007" name="Environ. Microbiol.">
        <title>Whole-genome analysis of the ammonia-oxidizing bacterium, Nitrosomonas eutropha C91: implications for niche adaptation.</title>
        <authorList>
            <person name="Stein L.Y."/>
            <person name="Arp D.J."/>
            <person name="Berube P.M."/>
            <person name="Chain P.S."/>
            <person name="Hauser L."/>
            <person name="Jetten M.S."/>
            <person name="Klotz M.G."/>
            <person name="Larimer F.W."/>
            <person name="Norton J.M."/>
            <person name="Op den Camp H.J.M."/>
            <person name="Shin M."/>
            <person name="Wei X."/>
        </authorList>
    </citation>
    <scope>NUCLEOTIDE SEQUENCE [LARGE SCALE GENOMIC DNA]</scope>
    <source>
        <strain>DSM 101675 / C91 / Nm57</strain>
    </source>
</reference>
<name>GLO2_NITEC</name>
<keyword id="KW-0378">Hydrolase</keyword>
<keyword id="KW-0479">Metal-binding</keyword>
<keyword id="KW-0862">Zinc</keyword>
<comment type="function">
    <text evidence="1">Thiolesterase that catalyzes the hydrolysis of S-D-lactoyl-glutathione to form glutathione and D-lactic acid.</text>
</comment>
<comment type="catalytic activity">
    <reaction evidence="1">
        <text>an S-(2-hydroxyacyl)glutathione + H2O = a 2-hydroxy carboxylate + glutathione + H(+)</text>
        <dbReference type="Rhea" id="RHEA:21864"/>
        <dbReference type="ChEBI" id="CHEBI:15377"/>
        <dbReference type="ChEBI" id="CHEBI:15378"/>
        <dbReference type="ChEBI" id="CHEBI:57925"/>
        <dbReference type="ChEBI" id="CHEBI:58896"/>
        <dbReference type="ChEBI" id="CHEBI:71261"/>
        <dbReference type="EC" id="3.1.2.6"/>
    </reaction>
</comment>
<comment type="cofactor">
    <cofactor evidence="1">
        <name>Zn(2+)</name>
        <dbReference type="ChEBI" id="CHEBI:29105"/>
    </cofactor>
    <text evidence="1">Binds 2 Zn(2+) ions per subunit.</text>
</comment>
<comment type="pathway">
    <text evidence="1">Secondary metabolite metabolism; methylglyoxal degradation; (R)-lactate from methylglyoxal: step 2/2.</text>
</comment>
<comment type="subunit">
    <text evidence="1">Monomer.</text>
</comment>
<comment type="similarity">
    <text evidence="1">Belongs to the metallo-beta-lactamase superfamily. Glyoxalase II family.</text>
</comment>
<accession>Q0AE32</accession>